<reference key="1">
    <citation type="journal article" date="1998" name="Curr. Biol.">
        <title>The Antirrhinum ERG gene encodes a protein related to bacterial small GTPases and is required for embryonic viability.</title>
        <authorList>
            <person name="Ingram G.C."/>
            <person name="Simon R."/>
            <person name="Carpenter R."/>
            <person name="Coen E.S."/>
        </authorList>
    </citation>
    <scope>NUCLEOTIDE SEQUENCE [MRNA]</scope>
</reference>
<sequence length="423" mass="48142">MKAVRAALRLRPLTNSISTSVYLHRFYSAQPQHTDDEHHPKPEELLHQSDAVFDSSHFDLDLNNLAASGAETTTWDERYRDRVKSRVFDEDDTSSYSKILKRDEEKKYKSAALAKSLLEAALDDEEVEVGEVKEEDQKSLSVGIIGAPNAGKSALTNYIVGTKVSAVSRKTNTTTHEVLGVLTKRDTQICFFDTPGLMLKKSGIPYNDIKVRNESGWSSITLYDVLIVIFDVHRHLTRPDSRVVRLIERVGSVSSTSQKRVLCMNKVDLVTKKNDLVKVAKEFKDLPGYERHFMVSGLKGYGLKDLAQYLTEQAVKRPWDEDPFAMSEEVMKNISLEVVREKLLDYVHQEIPYGIEHRLMGWKELRDGSLRIEQHFITPKMSQRKILVGKKGSKIGTIGIEANEELRSIFKRNVHLILMVKVK</sequence>
<feature type="chain" id="PRO_0000180079" description="GTP-binding protein ERG">
    <location>
        <begin position="1"/>
        <end position="423"/>
    </location>
</feature>
<feature type="domain" description="Era-type G" evidence="2">
    <location>
        <begin position="138"/>
        <end position="316"/>
    </location>
</feature>
<feature type="domain" description="KH type-2">
    <location>
        <begin position="347"/>
        <end position="423"/>
    </location>
</feature>
<feature type="region of interest" description="G1" evidence="2">
    <location>
        <begin position="146"/>
        <end position="153"/>
    </location>
</feature>
<feature type="region of interest" description="G2" evidence="2">
    <location>
        <begin position="172"/>
        <end position="176"/>
    </location>
</feature>
<feature type="region of interest" description="G3" evidence="2">
    <location>
        <begin position="193"/>
        <end position="196"/>
    </location>
</feature>
<feature type="region of interest" description="G4" evidence="2">
    <location>
        <begin position="265"/>
        <end position="268"/>
    </location>
</feature>
<feature type="region of interest" description="G5" evidence="2">
    <location>
        <begin position="295"/>
        <end position="297"/>
    </location>
</feature>
<feature type="binding site" evidence="1">
    <location>
        <begin position="146"/>
        <end position="153"/>
    </location>
    <ligand>
        <name>GTP</name>
        <dbReference type="ChEBI" id="CHEBI:37565"/>
    </ligand>
</feature>
<feature type="binding site" evidence="1">
    <location>
        <begin position="193"/>
        <end position="197"/>
    </location>
    <ligand>
        <name>GTP</name>
        <dbReference type="ChEBI" id="CHEBI:37565"/>
    </ligand>
</feature>
<feature type="binding site" evidence="1">
    <location>
        <begin position="265"/>
        <end position="268"/>
    </location>
    <ligand>
        <name>GTP</name>
        <dbReference type="ChEBI" id="CHEBI:37565"/>
    </ligand>
</feature>
<comment type="function">
    <text>Has a crucial role in plant growth and development, possibly by influencing mitochondrial division.</text>
</comment>
<comment type="similarity">
    <text evidence="2 3">Belongs to the TRAFAC class TrmE-Era-EngA-EngB-Septin-like GTPase superfamily. Era GTPase family.</text>
</comment>
<dbReference type="EMBL" id="Y17899">
    <property type="protein sequence ID" value="CAA76925.1"/>
    <property type="molecule type" value="mRNA"/>
</dbReference>
<dbReference type="SMR" id="O82626"/>
<dbReference type="GO" id="GO:0005525">
    <property type="term" value="F:GTP binding"/>
    <property type="evidence" value="ECO:0007669"/>
    <property type="project" value="UniProtKB-KW"/>
</dbReference>
<dbReference type="GO" id="GO:0043024">
    <property type="term" value="F:ribosomal small subunit binding"/>
    <property type="evidence" value="ECO:0007669"/>
    <property type="project" value="TreeGrafter"/>
</dbReference>
<dbReference type="GO" id="GO:0019843">
    <property type="term" value="F:rRNA binding"/>
    <property type="evidence" value="ECO:0007669"/>
    <property type="project" value="TreeGrafter"/>
</dbReference>
<dbReference type="GO" id="GO:0000028">
    <property type="term" value="P:ribosomal small subunit assembly"/>
    <property type="evidence" value="ECO:0007669"/>
    <property type="project" value="TreeGrafter"/>
</dbReference>
<dbReference type="CDD" id="cd04163">
    <property type="entry name" value="Era"/>
    <property type="match status" value="1"/>
</dbReference>
<dbReference type="CDD" id="cd22534">
    <property type="entry name" value="KH-II_Era"/>
    <property type="match status" value="1"/>
</dbReference>
<dbReference type="FunFam" id="3.30.300.20:FF:000017">
    <property type="entry name" value="GTP-binding protein ERG"/>
    <property type="match status" value="1"/>
</dbReference>
<dbReference type="FunFam" id="3.40.50.300:FF:001190">
    <property type="entry name" value="GTP-binding protein ERG"/>
    <property type="match status" value="1"/>
</dbReference>
<dbReference type="Gene3D" id="3.30.300.20">
    <property type="match status" value="1"/>
</dbReference>
<dbReference type="Gene3D" id="3.40.50.300">
    <property type="entry name" value="P-loop containing nucleotide triphosphate hydrolases"/>
    <property type="match status" value="1"/>
</dbReference>
<dbReference type="HAMAP" id="MF_00367">
    <property type="entry name" value="GTPase_Era"/>
    <property type="match status" value="1"/>
</dbReference>
<dbReference type="InterPro" id="IPR030388">
    <property type="entry name" value="G_ERA_dom"/>
</dbReference>
<dbReference type="InterPro" id="IPR006073">
    <property type="entry name" value="GTP-bd"/>
</dbReference>
<dbReference type="InterPro" id="IPR005662">
    <property type="entry name" value="GTPase_Era-like"/>
</dbReference>
<dbReference type="InterPro" id="IPR015946">
    <property type="entry name" value="KH_dom-like_a/b"/>
</dbReference>
<dbReference type="InterPro" id="IPR004044">
    <property type="entry name" value="KH_dom_type_2"/>
</dbReference>
<dbReference type="InterPro" id="IPR009019">
    <property type="entry name" value="KH_sf_prok-type"/>
</dbReference>
<dbReference type="InterPro" id="IPR027417">
    <property type="entry name" value="P-loop_NTPase"/>
</dbReference>
<dbReference type="InterPro" id="IPR005225">
    <property type="entry name" value="Small_GTP-bd"/>
</dbReference>
<dbReference type="NCBIfam" id="TIGR00436">
    <property type="entry name" value="era"/>
    <property type="match status" value="1"/>
</dbReference>
<dbReference type="NCBIfam" id="TIGR00231">
    <property type="entry name" value="small_GTP"/>
    <property type="match status" value="1"/>
</dbReference>
<dbReference type="PANTHER" id="PTHR42698">
    <property type="entry name" value="GTPASE ERA"/>
    <property type="match status" value="1"/>
</dbReference>
<dbReference type="PANTHER" id="PTHR42698:SF1">
    <property type="entry name" value="GTPASE ERA, MITOCHONDRIAL"/>
    <property type="match status" value="1"/>
</dbReference>
<dbReference type="Pfam" id="PF07650">
    <property type="entry name" value="KH_2"/>
    <property type="match status" value="1"/>
</dbReference>
<dbReference type="Pfam" id="PF01926">
    <property type="entry name" value="MMR_HSR1"/>
    <property type="match status" value="1"/>
</dbReference>
<dbReference type="SUPFAM" id="SSF52540">
    <property type="entry name" value="P-loop containing nucleoside triphosphate hydrolases"/>
    <property type="match status" value="1"/>
</dbReference>
<dbReference type="SUPFAM" id="SSF54814">
    <property type="entry name" value="Prokaryotic type KH domain (KH-domain type II)"/>
    <property type="match status" value="1"/>
</dbReference>
<dbReference type="PROSITE" id="PS51713">
    <property type="entry name" value="G_ERA"/>
    <property type="match status" value="1"/>
</dbReference>
<dbReference type="PROSITE" id="PS50823">
    <property type="entry name" value="KH_TYPE_2"/>
    <property type="match status" value="1"/>
</dbReference>
<name>ERG_ANTMA</name>
<gene>
    <name type="primary">ERG</name>
</gene>
<organism>
    <name type="scientific">Antirrhinum majus</name>
    <name type="common">Garden snapdragon</name>
    <dbReference type="NCBI Taxonomy" id="4151"/>
    <lineage>
        <taxon>Eukaryota</taxon>
        <taxon>Viridiplantae</taxon>
        <taxon>Streptophyta</taxon>
        <taxon>Embryophyta</taxon>
        <taxon>Tracheophyta</taxon>
        <taxon>Spermatophyta</taxon>
        <taxon>Magnoliopsida</taxon>
        <taxon>eudicotyledons</taxon>
        <taxon>Gunneridae</taxon>
        <taxon>Pentapetalae</taxon>
        <taxon>asterids</taxon>
        <taxon>lamiids</taxon>
        <taxon>Lamiales</taxon>
        <taxon>Plantaginaceae</taxon>
        <taxon>Antirrhineae</taxon>
        <taxon>Antirrhinum</taxon>
    </lineage>
</organism>
<protein>
    <recommendedName>
        <fullName>GTP-binding protein ERG</fullName>
    </recommendedName>
</protein>
<accession>O82626</accession>
<proteinExistence type="evidence at transcript level"/>
<keyword id="KW-0342">GTP-binding</keyword>
<keyword id="KW-0547">Nucleotide-binding</keyword>
<keyword id="KW-0694">RNA-binding</keyword>
<evidence type="ECO:0000255" key="1"/>
<evidence type="ECO:0000255" key="2">
    <source>
        <dbReference type="PROSITE-ProRule" id="PRU01050"/>
    </source>
</evidence>
<evidence type="ECO:0000305" key="3"/>